<feature type="chain" id="PRO_0000352299" description="5-dehydro-2-deoxygluconokinase">
    <location>
        <begin position="1"/>
        <end position="335"/>
    </location>
</feature>
<dbReference type="EC" id="2.7.1.92" evidence="1"/>
<dbReference type="EMBL" id="BA000043">
    <property type="protein sequence ID" value="BAD76173.1"/>
    <property type="molecule type" value="Genomic_DNA"/>
</dbReference>
<dbReference type="RefSeq" id="WP_011231378.1">
    <property type="nucleotide sequence ID" value="NC_006510.1"/>
</dbReference>
<dbReference type="SMR" id="Q5KYR3"/>
<dbReference type="STRING" id="235909.GK1888"/>
<dbReference type="GeneID" id="32063755"/>
<dbReference type="KEGG" id="gka:GK1888"/>
<dbReference type="eggNOG" id="COG0524">
    <property type="taxonomic scope" value="Bacteria"/>
</dbReference>
<dbReference type="HOGENOM" id="CLU_027634_6_0_9"/>
<dbReference type="UniPathway" id="UPA00076">
    <property type="reaction ID" value="UER00146"/>
</dbReference>
<dbReference type="Proteomes" id="UP000001172">
    <property type="component" value="Chromosome"/>
</dbReference>
<dbReference type="GO" id="GO:0047590">
    <property type="term" value="F:5-dehydro-2-deoxygluconokinase activity"/>
    <property type="evidence" value="ECO:0007669"/>
    <property type="project" value="UniProtKB-UniRule"/>
</dbReference>
<dbReference type="GO" id="GO:0005524">
    <property type="term" value="F:ATP binding"/>
    <property type="evidence" value="ECO:0007669"/>
    <property type="project" value="UniProtKB-UniRule"/>
</dbReference>
<dbReference type="GO" id="GO:0019310">
    <property type="term" value="P:inositol catabolic process"/>
    <property type="evidence" value="ECO:0007669"/>
    <property type="project" value="UniProtKB-UniRule"/>
</dbReference>
<dbReference type="CDD" id="cd01166">
    <property type="entry name" value="KdgK"/>
    <property type="match status" value="1"/>
</dbReference>
<dbReference type="Gene3D" id="3.40.1190.20">
    <property type="match status" value="1"/>
</dbReference>
<dbReference type="Gene3D" id="2.20.150.10">
    <property type="entry name" value="putative 5-dehydro-2- deoxygluconokinase"/>
    <property type="match status" value="1"/>
</dbReference>
<dbReference type="HAMAP" id="MF_01668">
    <property type="entry name" value="IolC"/>
    <property type="match status" value="1"/>
</dbReference>
<dbReference type="InterPro" id="IPR002173">
    <property type="entry name" value="Carboh/pur_kinase_PfkB_CS"/>
</dbReference>
<dbReference type="InterPro" id="IPR022841">
    <property type="entry name" value="DKG_kinase_firmi"/>
</dbReference>
<dbReference type="InterPro" id="IPR030830">
    <property type="entry name" value="Myo_inos_IolC"/>
</dbReference>
<dbReference type="InterPro" id="IPR023314">
    <property type="entry name" value="Myo_inos_IolC-like_sf"/>
</dbReference>
<dbReference type="InterPro" id="IPR050306">
    <property type="entry name" value="PfkB_Carbo_kinase"/>
</dbReference>
<dbReference type="InterPro" id="IPR011611">
    <property type="entry name" value="PfkB_dom"/>
</dbReference>
<dbReference type="InterPro" id="IPR029056">
    <property type="entry name" value="Ribokinase-like"/>
</dbReference>
<dbReference type="NCBIfam" id="TIGR04382">
    <property type="entry name" value="myo_inos_iolC_N"/>
    <property type="match status" value="1"/>
</dbReference>
<dbReference type="PANTHER" id="PTHR43085:SF49">
    <property type="entry name" value="5-DEHYDRO-2-DEOXYGLUCONOKINASE"/>
    <property type="match status" value="1"/>
</dbReference>
<dbReference type="PANTHER" id="PTHR43085">
    <property type="entry name" value="HEXOKINASE FAMILY MEMBER"/>
    <property type="match status" value="1"/>
</dbReference>
<dbReference type="Pfam" id="PF00294">
    <property type="entry name" value="PfkB"/>
    <property type="match status" value="1"/>
</dbReference>
<dbReference type="SUPFAM" id="SSF53613">
    <property type="entry name" value="Ribokinase-like"/>
    <property type="match status" value="1"/>
</dbReference>
<dbReference type="PROSITE" id="PS00584">
    <property type="entry name" value="PFKB_KINASES_2"/>
    <property type="match status" value="1"/>
</dbReference>
<gene>
    <name evidence="1" type="primary">iolC</name>
    <name type="ordered locus">GK1888</name>
</gene>
<proteinExistence type="inferred from homology"/>
<reference key="1">
    <citation type="journal article" date="2004" name="Nucleic Acids Res.">
        <title>Thermoadaptation trait revealed by the genome sequence of thermophilic Geobacillus kaustophilus.</title>
        <authorList>
            <person name="Takami H."/>
            <person name="Takaki Y."/>
            <person name="Chee G.-J."/>
            <person name="Nishi S."/>
            <person name="Shimamura S."/>
            <person name="Suzuki H."/>
            <person name="Matsui S."/>
            <person name="Uchiyama I."/>
        </authorList>
    </citation>
    <scope>NUCLEOTIDE SEQUENCE [LARGE SCALE GENOMIC DNA]</scope>
    <source>
        <strain>HTA426</strain>
    </source>
</reference>
<organism>
    <name type="scientific">Geobacillus kaustophilus (strain HTA426)</name>
    <dbReference type="NCBI Taxonomy" id="235909"/>
    <lineage>
        <taxon>Bacteria</taxon>
        <taxon>Bacillati</taxon>
        <taxon>Bacillota</taxon>
        <taxon>Bacilli</taxon>
        <taxon>Bacillales</taxon>
        <taxon>Anoxybacillaceae</taxon>
        <taxon>Geobacillus</taxon>
        <taxon>Geobacillus thermoleovorans group</taxon>
    </lineage>
</organism>
<evidence type="ECO:0000255" key="1">
    <source>
        <dbReference type="HAMAP-Rule" id="MF_01668"/>
    </source>
</evidence>
<accession>Q5KYR3</accession>
<comment type="function">
    <text evidence="1">Catalyzes the phosphorylation of 5-dehydro-2-deoxy-D-gluconate (2-deoxy-5-keto-D-gluconate or DKG) to 6-phospho-5-dehydro-2-deoxy-D-gluconate (DKGP).</text>
</comment>
<comment type="catalytic activity">
    <reaction evidence="1">
        <text>5-dehydro-2-deoxy-D-gluconate + ATP = 6-phospho-5-dehydro-2-deoxy-D-gluconate + ADP + H(+)</text>
        <dbReference type="Rhea" id="RHEA:13497"/>
        <dbReference type="ChEBI" id="CHEBI:15378"/>
        <dbReference type="ChEBI" id="CHEBI:16669"/>
        <dbReference type="ChEBI" id="CHEBI:30616"/>
        <dbReference type="ChEBI" id="CHEBI:57949"/>
        <dbReference type="ChEBI" id="CHEBI:456216"/>
        <dbReference type="EC" id="2.7.1.92"/>
    </reaction>
</comment>
<comment type="pathway">
    <text evidence="1">Polyol metabolism; myo-inositol degradation into acetyl-CoA; acetyl-CoA from myo-inositol: step 5/7.</text>
</comment>
<comment type="similarity">
    <text evidence="1">Belongs to the carbohydrate kinase PfkB family.</text>
</comment>
<sequence>MSFLPFDQQKPLDFIAVGRLCIDLNANEIHRPMEETMTFTKYVGGSPANIAIGMARLGMKTGFIGRVADDQMGRFIVRYLKNNGIDTSHVITDKSGSVTGLAFTEIKSPTDCSILMYRDNVADLKLEPNDIDEDYIRRAKCLLISGTALAKSPSREAVFLALDYARRHGTVVVFDLDYRPYTWQSKEETAIYYNLAAEKCDVIIGTREEFDMMERFDGQRRDDEQTARKWFDYNAKIVVIKHGKDGSIAYTKTGETFVGTIFPANIVKTFGAGDSYAAGFIYGLMNDWPIPKAMEYGAAAASIVISSHSCSDAMPTLAQIEQFIEQHRNGSAARK</sequence>
<protein>
    <recommendedName>
        <fullName evidence="1">5-dehydro-2-deoxygluconokinase</fullName>
        <ecNumber evidence="1">2.7.1.92</ecNumber>
    </recommendedName>
    <alternativeName>
        <fullName evidence="1">2-deoxy-5-keto-D-gluconate kinase</fullName>
        <shortName evidence="1">DKG kinase</shortName>
    </alternativeName>
</protein>
<keyword id="KW-0067">ATP-binding</keyword>
<keyword id="KW-0418">Kinase</keyword>
<keyword id="KW-0547">Nucleotide-binding</keyword>
<keyword id="KW-1185">Reference proteome</keyword>
<keyword id="KW-0808">Transferase</keyword>
<name>IOLC_GEOKA</name>